<gene>
    <name type="primary">STC2</name>
</gene>
<protein>
    <recommendedName>
        <fullName>Stanniocalcin-2</fullName>
        <shortName>STC-2</shortName>
    </recommendedName>
    <alternativeName>
        <fullName>Stanniocalcin-related protein</fullName>
        <shortName>STC-related protein</shortName>
        <shortName>STCRP</shortName>
    </alternativeName>
</protein>
<dbReference type="EMBL" id="AF055460">
    <property type="protein sequence ID" value="AAC27036.1"/>
    <property type="molecule type" value="mRNA"/>
</dbReference>
<dbReference type="EMBL" id="AB012664">
    <property type="protein sequence ID" value="BAA33489.1"/>
    <property type="molecule type" value="mRNA"/>
</dbReference>
<dbReference type="EMBL" id="AF098462">
    <property type="protein sequence ID" value="AAC97948.1"/>
    <property type="molecule type" value="mRNA"/>
</dbReference>
<dbReference type="EMBL" id="AF031036">
    <property type="protein sequence ID" value="AAD01922.1"/>
    <property type="molecule type" value="mRNA"/>
</dbReference>
<dbReference type="EMBL" id="BT019591">
    <property type="protein sequence ID" value="AAV38398.1"/>
    <property type="molecule type" value="mRNA"/>
</dbReference>
<dbReference type="EMBL" id="BC000658">
    <property type="protein sequence ID" value="AAH00658.1"/>
    <property type="molecule type" value="mRNA"/>
</dbReference>
<dbReference type="EMBL" id="BC006352">
    <property type="protein sequence ID" value="AAH06352.1"/>
    <property type="molecule type" value="mRNA"/>
</dbReference>
<dbReference type="EMBL" id="BC013958">
    <property type="protein sequence ID" value="AAH13958.1"/>
    <property type="molecule type" value="mRNA"/>
</dbReference>
<dbReference type="CCDS" id="CCDS4388.1"/>
<dbReference type="PIR" id="JE0357">
    <property type="entry name" value="JE0357"/>
</dbReference>
<dbReference type="RefSeq" id="NP_003705.1">
    <property type="nucleotide sequence ID" value="NM_003714.3"/>
</dbReference>
<dbReference type="PDB" id="7Y5Q">
    <property type="method" value="EM"/>
    <property type="resolution" value="3.80 A"/>
    <property type="chains" value="C=1-302"/>
</dbReference>
<dbReference type="PDB" id="8A7D">
    <property type="method" value="EM"/>
    <property type="resolution" value="3.06 A"/>
    <property type="chains" value="P=44-210"/>
</dbReference>
<dbReference type="PDB" id="8A7E">
    <property type="method" value="EM"/>
    <property type="resolution" value="5.02 A"/>
    <property type="chains" value="A/P=44-211"/>
</dbReference>
<dbReference type="PDB" id="8HGH">
    <property type="method" value="EM"/>
    <property type="resolution" value="4.16 A"/>
    <property type="chains" value="C/G=1-302"/>
</dbReference>
<dbReference type="PDBsum" id="7Y5Q"/>
<dbReference type="PDBsum" id="8A7D"/>
<dbReference type="PDBsum" id="8A7E"/>
<dbReference type="PDBsum" id="8HGH"/>
<dbReference type="EMDB" id="EMD-15217"/>
<dbReference type="EMDB" id="EMD-15219"/>
<dbReference type="EMDB" id="EMD-15220"/>
<dbReference type="EMDB" id="EMD-15221"/>
<dbReference type="EMDB" id="EMD-33622"/>
<dbReference type="EMDB" id="EMD-34739"/>
<dbReference type="SMR" id="O76061"/>
<dbReference type="BioGRID" id="114172">
    <property type="interactions" value="57"/>
</dbReference>
<dbReference type="FunCoup" id="O76061">
    <property type="interactions" value="401"/>
</dbReference>
<dbReference type="IntAct" id="O76061">
    <property type="interactions" value="39"/>
</dbReference>
<dbReference type="STRING" id="9606.ENSP00000265087"/>
<dbReference type="GlyConnect" id="1769">
    <property type="glycosylation" value="5 N-Linked glycans (1 site)"/>
</dbReference>
<dbReference type="GlyCosmos" id="O76061">
    <property type="glycosylation" value="3 sites, 5 glycans"/>
</dbReference>
<dbReference type="GlyGen" id="O76061">
    <property type="glycosylation" value="5 sites, 4 N-linked glycans (1 site), 3 O-linked glycans (4 sites)"/>
</dbReference>
<dbReference type="iPTMnet" id="O76061"/>
<dbReference type="PhosphoSitePlus" id="O76061"/>
<dbReference type="BioMuta" id="STC2"/>
<dbReference type="jPOST" id="O76061"/>
<dbReference type="MassIVE" id="O76061"/>
<dbReference type="PaxDb" id="9606-ENSP00000265087"/>
<dbReference type="PeptideAtlas" id="O76061"/>
<dbReference type="ProteomicsDB" id="50367"/>
<dbReference type="Pumba" id="O76061"/>
<dbReference type="Antibodypedia" id="28957">
    <property type="antibodies" value="411 antibodies from 34 providers"/>
</dbReference>
<dbReference type="DNASU" id="8614"/>
<dbReference type="Ensembl" id="ENST00000265087.9">
    <property type="protein sequence ID" value="ENSP00000265087.4"/>
    <property type="gene ID" value="ENSG00000113739.11"/>
</dbReference>
<dbReference type="GeneID" id="8614"/>
<dbReference type="KEGG" id="hsa:8614"/>
<dbReference type="MANE-Select" id="ENST00000265087.9">
    <property type="protein sequence ID" value="ENSP00000265087.4"/>
    <property type="RefSeq nucleotide sequence ID" value="NM_003714.3"/>
    <property type="RefSeq protein sequence ID" value="NP_003705.1"/>
</dbReference>
<dbReference type="AGR" id="HGNC:11374"/>
<dbReference type="CTD" id="8614"/>
<dbReference type="DisGeNET" id="8614"/>
<dbReference type="GeneCards" id="STC2"/>
<dbReference type="HGNC" id="HGNC:11374">
    <property type="gene designation" value="STC2"/>
</dbReference>
<dbReference type="HPA" id="ENSG00000113739">
    <property type="expression patterns" value="Tissue enriched (breast)"/>
</dbReference>
<dbReference type="MIM" id="603665">
    <property type="type" value="gene"/>
</dbReference>
<dbReference type="neXtProt" id="NX_O76061"/>
<dbReference type="OpenTargets" id="ENSG00000113739"/>
<dbReference type="PharmGKB" id="PA36191"/>
<dbReference type="VEuPathDB" id="HostDB:ENSG00000113739"/>
<dbReference type="eggNOG" id="ENOG502QU7E">
    <property type="taxonomic scope" value="Eukaryota"/>
</dbReference>
<dbReference type="GeneTree" id="ENSGT00390000005989"/>
<dbReference type="HOGENOM" id="CLU_064102_0_0_1"/>
<dbReference type="InParanoid" id="O76061"/>
<dbReference type="OMA" id="HNSKATH"/>
<dbReference type="OrthoDB" id="8931566at2759"/>
<dbReference type="PAN-GO" id="O76061">
    <property type="GO annotations" value="2 GO annotations based on evolutionary models"/>
</dbReference>
<dbReference type="PhylomeDB" id="O76061"/>
<dbReference type="TreeFam" id="TF324693"/>
<dbReference type="PathwayCommons" id="O76061"/>
<dbReference type="Reactome" id="R-HSA-381426">
    <property type="pathway name" value="Regulation of Insulin-like Growth Factor (IGF) transport and uptake by Insulin-like Growth Factor Binding Proteins (IGFBPs)"/>
</dbReference>
<dbReference type="Reactome" id="R-HSA-8957275">
    <property type="pathway name" value="Post-translational protein phosphorylation"/>
</dbReference>
<dbReference type="SignaLink" id="O76061"/>
<dbReference type="SIGNOR" id="O76061"/>
<dbReference type="BioGRID-ORCS" id="8614">
    <property type="hits" value="11 hits in 1161 CRISPR screens"/>
</dbReference>
<dbReference type="ChiTaRS" id="STC2">
    <property type="organism name" value="human"/>
</dbReference>
<dbReference type="GeneWiki" id="STC2"/>
<dbReference type="GenomeRNAi" id="8614"/>
<dbReference type="Pharos" id="O76061">
    <property type="development level" value="Tbio"/>
</dbReference>
<dbReference type="PRO" id="PR:O76061"/>
<dbReference type="Proteomes" id="UP000005640">
    <property type="component" value="Chromosome 5"/>
</dbReference>
<dbReference type="RNAct" id="O76061">
    <property type="molecule type" value="protein"/>
</dbReference>
<dbReference type="Bgee" id="ENSG00000113739">
    <property type="expression patterns" value="Expressed in stromal cell of endometrium and 122 other cell types or tissues"/>
</dbReference>
<dbReference type="ExpressionAtlas" id="O76061">
    <property type="expression patterns" value="baseline and differential"/>
</dbReference>
<dbReference type="GO" id="GO:0005783">
    <property type="term" value="C:endoplasmic reticulum"/>
    <property type="evidence" value="ECO:0000314"/>
    <property type="project" value="UniProtKB"/>
</dbReference>
<dbReference type="GO" id="GO:0005788">
    <property type="term" value="C:endoplasmic reticulum lumen"/>
    <property type="evidence" value="ECO:0000304"/>
    <property type="project" value="Reactome"/>
</dbReference>
<dbReference type="GO" id="GO:0005615">
    <property type="term" value="C:extracellular space"/>
    <property type="evidence" value="ECO:0007005"/>
    <property type="project" value="UniProtKB"/>
</dbReference>
<dbReference type="GO" id="GO:0005794">
    <property type="term" value="C:Golgi apparatus"/>
    <property type="evidence" value="ECO:0007669"/>
    <property type="project" value="Ensembl"/>
</dbReference>
<dbReference type="GO" id="GO:0048471">
    <property type="term" value="C:perinuclear region of cytoplasm"/>
    <property type="evidence" value="ECO:0000314"/>
    <property type="project" value="UniProtKB"/>
</dbReference>
<dbReference type="GO" id="GO:0019899">
    <property type="term" value="F:enzyme binding"/>
    <property type="evidence" value="ECO:0000314"/>
    <property type="project" value="UniProtKB"/>
</dbReference>
<dbReference type="GO" id="GO:0020037">
    <property type="term" value="F:heme binding"/>
    <property type="evidence" value="ECO:0000314"/>
    <property type="project" value="UniProtKB"/>
</dbReference>
<dbReference type="GO" id="GO:0005179">
    <property type="term" value="F:hormone activity"/>
    <property type="evidence" value="ECO:0007669"/>
    <property type="project" value="UniProtKB-KW"/>
</dbReference>
<dbReference type="GO" id="GO:0042803">
    <property type="term" value="F:protein homodimerization activity"/>
    <property type="evidence" value="ECO:0000314"/>
    <property type="project" value="UniProtKB"/>
</dbReference>
<dbReference type="GO" id="GO:0071456">
    <property type="term" value="P:cellular response to hypoxia"/>
    <property type="evidence" value="ECO:0007669"/>
    <property type="project" value="Ensembl"/>
</dbReference>
<dbReference type="GO" id="GO:0046697">
    <property type="term" value="P:decidualization"/>
    <property type="evidence" value="ECO:0007669"/>
    <property type="project" value="Ensembl"/>
</dbReference>
<dbReference type="GO" id="GO:0007566">
    <property type="term" value="P:embryo implantation"/>
    <property type="evidence" value="ECO:0007669"/>
    <property type="project" value="Ensembl"/>
</dbReference>
<dbReference type="GO" id="GO:0030968">
    <property type="term" value="P:endoplasmic reticulum unfolded protein response"/>
    <property type="evidence" value="ECO:0007669"/>
    <property type="project" value="Ensembl"/>
</dbReference>
<dbReference type="GO" id="GO:0006874">
    <property type="term" value="P:intracellular calcium ion homeostasis"/>
    <property type="evidence" value="ECO:0000318"/>
    <property type="project" value="GO_Central"/>
</dbReference>
<dbReference type="GO" id="GO:0010629">
    <property type="term" value="P:negative regulation of gene expression"/>
    <property type="evidence" value="ECO:0000314"/>
    <property type="project" value="UniProtKB"/>
</dbReference>
<dbReference type="GO" id="GO:0040015">
    <property type="term" value="P:negative regulation of multicellular organism growth"/>
    <property type="evidence" value="ECO:0007669"/>
    <property type="project" value="Ensembl"/>
</dbReference>
<dbReference type="GO" id="GO:0046885">
    <property type="term" value="P:regulation of hormone biosynthetic process"/>
    <property type="evidence" value="ECO:0000314"/>
    <property type="project" value="UniProtKB"/>
</dbReference>
<dbReference type="GO" id="GO:2001256">
    <property type="term" value="P:regulation of store-operated calcium entry"/>
    <property type="evidence" value="ECO:0007669"/>
    <property type="project" value="Ensembl"/>
</dbReference>
<dbReference type="GO" id="GO:0006979">
    <property type="term" value="P:response to oxidative stress"/>
    <property type="evidence" value="ECO:0007669"/>
    <property type="project" value="Ensembl"/>
</dbReference>
<dbReference type="GO" id="GO:0043434">
    <property type="term" value="P:response to peptide hormone"/>
    <property type="evidence" value="ECO:0007669"/>
    <property type="project" value="Ensembl"/>
</dbReference>
<dbReference type="GO" id="GO:0033280">
    <property type="term" value="P:response to vitamin D"/>
    <property type="evidence" value="ECO:0007669"/>
    <property type="project" value="Ensembl"/>
</dbReference>
<dbReference type="InterPro" id="IPR004978">
    <property type="entry name" value="Stanniocalcin"/>
</dbReference>
<dbReference type="PANTHER" id="PTHR11245">
    <property type="entry name" value="STANNIOCALCIN"/>
    <property type="match status" value="1"/>
</dbReference>
<dbReference type="PANTHER" id="PTHR11245:SF2">
    <property type="entry name" value="STANNIOCALCIN-2"/>
    <property type="match status" value="1"/>
</dbReference>
<dbReference type="Pfam" id="PF03298">
    <property type="entry name" value="Stanniocalcin"/>
    <property type="match status" value="1"/>
</dbReference>
<reference key="1">
    <citation type="journal article" date="1998" name="Mol. Cell. Endocrinol.">
        <title>Identification of a second stanniocalcin cDNA in mouse and human: stanniocalcin 2.</title>
        <authorList>
            <person name="Chang A.C.-M."/>
            <person name="Reddel R.R."/>
        </authorList>
    </citation>
    <scope>NUCLEOTIDE SEQUENCE [MRNA]</scope>
</reference>
<reference key="2">
    <citation type="journal article" date="1998" name="Biochem. Biophys. Res. Commun.">
        <title>Molecular cloning of a second human stanniocalcin homologue (STC2).</title>
        <authorList>
            <person name="Ishiabshi K."/>
            <person name="Miyamoto K."/>
            <person name="Taketani Y."/>
            <person name="Morita K."/>
            <person name="Takeda E."/>
            <person name="Sasaki S."/>
            <person name="Imai M."/>
        </authorList>
    </citation>
    <scope>NUCLEOTIDE SEQUENCE [MRNA]</scope>
    <source>
        <tissue>Osteosarcoma</tissue>
    </source>
</reference>
<reference key="3">
    <citation type="journal article" date="1998" name="Mol. Cell. Endocrinol.">
        <title>Molecular cloning and characterization of stanniocalcin-related protein.</title>
        <authorList>
            <person name="DiMattia G.E."/>
            <person name="Varghese R."/>
            <person name="Wagner G.F."/>
        </authorList>
    </citation>
    <scope>NUCLEOTIDE SEQUENCE [MRNA]</scope>
</reference>
<reference key="4">
    <citation type="journal article" date="1999" name="Horm. Metab. Res.">
        <title>Stanniocalcin 2: characterization of the protein and its localization to human pancreatic alpha cells.</title>
        <authorList>
            <person name="Moore E.E."/>
            <person name="Kuestner R.E."/>
            <person name="Conklin D.C."/>
            <person name="Whitmore T.E."/>
            <person name="Downey W."/>
            <person name="Buddle M.M."/>
            <person name="Adams R.L."/>
            <person name="Bell L.A."/>
            <person name="Thompson D.L."/>
            <person name="Wolf A."/>
            <person name="Chen L."/>
            <person name="Stamm M.R."/>
            <person name="Grant F.J."/>
            <person name="Lok S."/>
            <person name="Ren H."/>
            <person name="de Jongh K.S."/>
        </authorList>
    </citation>
    <scope>NUCLEOTIDE SEQUENCE [MRNA]</scope>
    <scope>CHARACTERIZATION</scope>
    <source>
        <tissue>Mammary carcinoma</tissue>
    </source>
</reference>
<reference key="5">
    <citation type="submission" date="2004-10" db="EMBL/GenBank/DDBJ databases">
        <title>Cloning of human full-length CDSs in BD Creator(TM) system donor vector.</title>
        <authorList>
            <person name="Kalnine N."/>
            <person name="Chen X."/>
            <person name="Rolfs A."/>
            <person name="Halleck A."/>
            <person name="Hines L."/>
            <person name="Eisenstein S."/>
            <person name="Koundinya M."/>
            <person name="Raphael J."/>
            <person name="Moreira D."/>
            <person name="Kelley T."/>
            <person name="LaBaer J."/>
            <person name="Lin Y."/>
            <person name="Phelan M."/>
            <person name="Farmer A."/>
        </authorList>
    </citation>
    <scope>NUCLEOTIDE SEQUENCE [LARGE SCALE MRNA]</scope>
</reference>
<reference key="6">
    <citation type="journal article" date="2004" name="Genome Res.">
        <title>The status, quality, and expansion of the NIH full-length cDNA project: the Mammalian Gene Collection (MGC).</title>
        <authorList>
            <consortium name="The MGC Project Team"/>
        </authorList>
    </citation>
    <scope>NUCLEOTIDE SEQUENCE [LARGE SCALE MRNA]</scope>
    <source>
        <tissue>Kidney</tissue>
        <tissue>Muscle</tissue>
    </source>
</reference>
<reference key="7">
    <citation type="journal article" date="2015" name="Cell">
        <title>A single kinase generates the majority of the secreted phosphoproteome.</title>
        <authorList>
            <person name="Tagliabracci V.S."/>
            <person name="Wiley S.E."/>
            <person name="Guo X."/>
            <person name="Kinch L.N."/>
            <person name="Durrant E."/>
            <person name="Wen J."/>
            <person name="Xiao J."/>
            <person name="Cui J."/>
            <person name="Nguyen K.B."/>
            <person name="Engel J.L."/>
            <person name="Coon J.J."/>
            <person name="Grishin N."/>
            <person name="Pinna L.A."/>
            <person name="Pagliarini D.J."/>
            <person name="Dixon J.E."/>
        </authorList>
    </citation>
    <scope>PHOSPHORYLATION AT SER-250; SER-251 AND THR-254</scope>
</reference>
<organism>
    <name type="scientific">Homo sapiens</name>
    <name type="common">Human</name>
    <dbReference type="NCBI Taxonomy" id="9606"/>
    <lineage>
        <taxon>Eukaryota</taxon>
        <taxon>Metazoa</taxon>
        <taxon>Chordata</taxon>
        <taxon>Craniata</taxon>
        <taxon>Vertebrata</taxon>
        <taxon>Euteleostomi</taxon>
        <taxon>Mammalia</taxon>
        <taxon>Eutheria</taxon>
        <taxon>Euarchontoglires</taxon>
        <taxon>Primates</taxon>
        <taxon>Haplorrhini</taxon>
        <taxon>Catarrhini</taxon>
        <taxon>Hominidae</taxon>
        <taxon>Homo</taxon>
    </lineage>
</organism>
<accession>O76061</accession>
<evidence type="ECO:0000255" key="1"/>
<evidence type="ECO:0000256" key="2">
    <source>
        <dbReference type="SAM" id="MobiDB-lite"/>
    </source>
</evidence>
<evidence type="ECO:0000269" key="3">
    <source>
    </source>
</evidence>
<evidence type="ECO:0000305" key="4"/>
<evidence type="ECO:0007829" key="5">
    <source>
        <dbReference type="PDB" id="8A7D"/>
    </source>
</evidence>
<comment type="function">
    <text>Has an anti-hypocalcemic action on calcium and phosphate homeostasis.</text>
</comment>
<comment type="subunit">
    <text>Homodimer; disulfide-linked.</text>
</comment>
<comment type="subcellular location">
    <subcellularLocation>
        <location evidence="4">Secreted</location>
    </subcellularLocation>
</comment>
<comment type="tissue specificity">
    <text>Expressed in a variety of tissues including muscle, heart, pancreas, kidney, spleen, prostate, small intestine, colon and peripheral blood leukocytes.</text>
</comment>
<comment type="similarity">
    <text evidence="4">Belongs to the stanniocalcin family.</text>
</comment>
<keyword id="KW-0002">3D-structure</keyword>
<keyword id="KW-1015">Disulfide bond</keyword>
<keyword id="KW-0325">Glycoprotein</keyword>
<keyword id="KW-0372">Hormone</keyword>
<keyword id="KW-0597">Phosphoprotein</keyword>
<keyword id="KW-1267">Proteomics identification</keyword>
<keyword id="KW-1185">Reference proteome</keyword>
<keyword id="KW-0964">Secreted</keyword>
<keyword id="KW-0732">Signal</keyword>
<name>STC2_HUMAN</name>
<sequence>MCAERLGQFMTLALVLATFDPARGTDATNPPEGPQDRSSQQKGRLSLQNTAEIQHCLVNAGDVGCGVFECFENNSCEIRGLHGICMTFLHNAGKFDAQGKSFIKDALKCKAHALRHRFGCISRKCPAIREMVSQLQRECYLKHDLCAAAQENTRVIVEMIHFKDLLLHEPYVDLVNLLLTCGEEVKEAITHSVQVQCEQNWGSLCSILSFCTSAIQKPPTAPPERQPQVDRTKLSRAHHGEAGHHLPEPSSRETGRGAKGERGSKSHPNAHARGRVGGLGAQGPSGSSEWEDEQSEYSDIRR</sequence>
<feature type="signal peptide" evidence="1">
    <location>
        <begin position="1"/>
        <end position="24"/>
    </location>
</feature>
<feature type="chain" id="PRO_0000033303" description="Stanniocalcin-2">
    <location>
        <begin position="25"/>
        <end position="302"/>
    </location>
</feature>
<feature type="region of interest" description="Disordered" evidence="2">
    <location>
        <begin position="23"/>
        <end position="44"/>
    </location>
</feature>
<feature type="region of interest" description="Disordered" evidence="2">
    <location>
        <begin position="217"/>
        <end position="302"/>
    </location>
</feature>
<feature type="compositionally biased region" description="Basic and acidic residues" evidence="2">
    <location>
        <begin position="227"/>
        <end position="264"/>
    </location>
</feature>
<feature type="modified residue" description="Phosphoserine; by FAM20C" evidence="3">
    <location>
        <position position="250"/>
    </location>
</feature>
<feature type="modified residue" description="Phosphoserine; by FAM20C" evidence="3">
    <location>
        <position position="251"/>
    </location>
</feature>
<feature type="modified residue" description="Phosphothreonine; by FAM20C" evidence="3">
    <location>
        <position position="254"/>
    </location>
</feature>
<feature type="glycosylation site" description="N-linked (GlcNAc...) asparagine" evidence="1">
    <location>
        <position position="73"/>
    </location>
</feature>
<feature type="helix" evidence="5">
    <location>
        <begin position="47"/>
        <end position="59"/>
    </location>
</feature>
<feature type="helix" evidence="5">
    <location>
        <begin position="66"/>
        <end position="71"/>
    </location>
</feature>
<feature type="helix" evidence="5">
    <location>
        <begin position="81"/>
        <end position="91"/>
    </location>
</feature>
<feature type="helix" evidence="5">
    <location>
        <begin position="92"/>
        <end position="94"/>
    </location>
</feature>
<feature type="helix" evidence="5">
    <location>
        <begin position="97"/>
        <end position="117"/>
    </location>
</feature>
<feature type="strand" evidence="5">
    <location>
        <begin position="118"/>
        <end position="120"/>
    </location>
</feature>
<feature type="strand" evidence="5">
    <location>
        <begin position="122"/>
        <end position="124"/>
    </location>
</feature>
<feature type="helix" evidence="5">
    <location>
        <begin position="125"/>
        <end position="142"/>
    </location>
</feature>
<feature type="helix" evidence="5">
    <location>
        <begin position="145"/>
        <end position="151"/>
    </location>
</feature>
<feature type="helix" evidence="5">
    <location>
        <begin position="153"/>
        <end position="159"/>
    </location>
</feature>
<feature type="helix" evidence="5">
    <location>
        <begin position="162"/>
        <end position="167"/>
    </location>
</feature>
<feature type="helix" evidence="5">
    <location>
        <begin position="169"/>
        <end position="179"/>
    </location>
</feature>
<feature type="helix" evidence="5">
    <location>
        <begin position="183"/>
        <end position="201"/>
    </location>
</feature>
<feature type="helix" evidence="5">
    <location>
        <begin position="203"/>
        <end position="208"/>
    </location>
</feature>
<proteinExistence type="evidence at protein level"/>